<sequence>MDGRNERPTTPVSDFRVGSSEQSQAGVNLEDSSDYRTSNSAESKKGNLSGKSISDLGISNNDNKNVRFTADTDALENDLSSRSTETSDNSKGTDGQGEEDRPARHKRKPKVSFTHLRNNGKDGDDETFIKKIINNLTGNQGGLVPGLAPIPSENENGKDDIEKNNRNEEIPLSDLADASKIVDVHEGDNKEKLEALKLESDVNCTSDGETLGSSSKNSFLAPAVDHFDDYAENNSSDDNEGFIETSTYVPPPSQVKSGVLGSLLKLYQNEDQNSSSIFSDSQAVTTDDEGISSTAGNKDVPVAKRSRLQNLKGKAKKGRMPRLKKRLKTEAKITVHIADILQRHRFILRMCRALMMYGAPTHRLEEYMVMTSRVLEIDGQFLYLPGCMIVSFGDATTRTSEVQLVRCTQGLNLWKLHQVHAVYKRVVHDTLGADEGNALLDQILADTNLYPPWMCVLLYAFCSAMVTPYAFGGDWVNLAISFFMGLCVGSLQFILSQKSYMYSNVFEISASIVVSFCGRAFGSIPRSHICFGAVTQGSLALILPGYIILCGALELQSRSLVAGAVRMFYAIIYSLFLGFGITLGSALFGWMYHNATNEISCPQLISPWFRFLFVPAFTISISLLNQAHISQLPVMVFISCTGYVVTYWAGKHFANSTEFTAALAAFVIGVLGNLYSRIWKGLAVSAMLPAIFVQVPSGIASQNSLLSGLQSANTIVNANETITTSTSDPSSSMSFGMTMIQVCVGISVGLFASSLFVYPFGKKKTGLFSL</sequence>
<dbReference type="EMBL" id="AAFW02000044">
    <property type="protein sequence ID" value="EDN63271.1"/>
    <property type="molecule type" value="Genomic_DNA"/>
</dbReference>
<dbReference type="HOGENOM" id="CLU_007078_1_1_1"/>
<dbReference type="OrthoDB" id="7130at4893"/>
<dbReference type="Proteomes" id="UP000007060">
    <property type="component" value="Unassembled WGS sequence"/>
</dbReference>
<dbReference type="GO" id="GO:0016020">
    <property type="term" value="C:membrane"/>
    <property type="evidence" value="ECO:0007669"/>
    <property type="project" value="UniProtKB-SubCell"/>
</dbReference>
<dbReference type="GO" id="GO:0022857">
    <property type="term" value="F:transmembrane transporter activity"/>
    <property type="evidence" value="ECO:0007669"/>
    <property type="project" value="InterPro"/>
</dbReference>
<dbReference type="InterPro" id="IPR010619">
    <property type="entry name" value="ThrE-like_N"/>
</dbReference>
<dbReference type="InterPro" id="IPR051361">
    <property type="entry name" value="ThrE/Ser_Exporter"/>
</dbReference>
<dbReference type="InterPro" id="IPR024528">
    <property type="entry name" value="ThrE_2"/>
</dbReference>
<dbReference type="PANTHER" id="PTHR31082">
    <property type="entry name" value="PHEROMONE-REGULATED MEMBRANE PROTEIN 10"/>
    <property type="match status" value="1"/>
</dbReference>
<dbReference type="PANTHER" id="PTHR31082:SF4">
    <property type="entry name" value="PHEROMONE-REGULATED MEMBRANE PROTEIN 10"/>
    <property type="match status" value="1"/>
</dbReference>
<dbReference type="Pfam" id="PF06738">
    <property type="entry name" value="ThrE"/>
    <property type="match status" value="1"/>
</dbReference>
<dbReference type="Pfam" id="PF12821">
    <property type="entry name" value="ThrE_2"/>
    <property type="match status" value="1"/>
</dbReference>
<comment type="subcellular location">
    <subcellularLocation>
        <location>Membrane</location>
        <topology>Multi-pass membrane protein</topology>
    </subcellularLocation>
</comment>
<comment type="similarity">
    <text evidence="3">Belongs to the ThrE exporter (TC 2.A.79) family.</text>
</comment>
<accession>A6ZQL9</accession>
<gene>
    <name type="primary">PRM10</name>
    <name type="ORF">SCY_3180</name>
</gene>
<reference key="1">
    <citation type="journal article" date="2007" name="Proc. Natl. Acad. Sci. U.S.A.">
        <title>Genome sequencing and comparative analysis of Saccharomyces cerevisiae strain YJM789.</title>
        <authorList>
            <person name="Wei W."/>
            <person name="McCusker J.H."/>
            <person name="Hyman R.W."/>
            <person name="Jones T."/>
            <person name="Ning Y."/>
            <person name="Cao Z."/>
            <person name="Gu Z."/>
            <person name="Bruno D."/>
            <person name="Miranda M."/>
            <person name="Nguyen M."/>
            <person name="Wilhelmy J."/>
            <person name="Komp C."/>
            <person name="Tamse R."/>
            <person name="Wang X."/>
            <person name="Jia P."/>
            <person name="Luedi P."/>
            <person name="Oefner P.J."/>
            <person name="David L."/>
            <person name="Dietrich F.S."/>
            <person name="Li Y."/>
            <person name="Davis R.W."/>
            <person name="Steinmetz L.M."/>
        </authorList>
    </citation>
    <scope>NUCLEOTIDE SEQUENCE [LARGE SCALE GENOMIC DNA]</scope>
    <source>
        <strain>YJM789</strain>
    </source>
</reference>
<keyword id="KW-0472">Membrane</keyword>
<keyword id="KW-0812">Transmembrane</keyword>
<keyword id="KW-1133">Transmembrane helix</keyword>
<organism>
    <name type="scientific">Saccharomyces cerevisiae (strain YJM789)</name>
    <name type="common">Baker's yeast</name>
    <dbReference type="NCBI Taxonomy" id="307796"/>
    <lineage>
        <taxon>Eukaryota</taxon>
        <taxon>Fungi</taxon>
        <taxon>Dikarya</taxon>
        <taxon>Ascomycota</taxon>
        <taxon>Saccharomycotina</taxon>
        <taxon>Saccharomycetes</taxon>
        <taxon>Saccharomycetales</taxon>
        <taxon>Saccharomycetaceae</taxon>
        <taxon>Saccharomyces</taxon>
    </lineage>
</organism>
<protein>
    <recommendedName>
        <fullName>Pheromone-regulated membrane protein 10</fullName>
    </recommendedName>
</protein>
<evidence type="ECO:0000255" key="1"/>
<evidence type="ECO:0000256" key="2">
    <source>
        <dbReference type="SAM" id="MobiDB-lite"/>
    </source>
</evidence>
<evidence type="ECO:0000305" key="3"/>
<feature type="chain" id="PRO_0000409257" description="Pheromone-regulated membrane protein 10">
    <location>
        <begin position="1"/>
        <end position="770"/>
    </location>
</feature>
<feature type="transmembrane region" description="Helical" evidence="1">
    <location>
        <begin position="453"/>
        <end position="473"/>
    </location>
</feature>
<feature type="transmembrane region" description="Helical" evidence="1">
    <location>
        <begin position="475"/>
        <end position="495"/>
    </location>
</feature>
<feature type="transmembrane region" description="Helical" evidence="1">
    <location>
        <begin position="505"/>
        <end position="525"/>
    </location>
</feature>
<feature type="transmembrane region" description="Helical" evidence="1">
    <location>
        <begin position="529"/>
        <end position="549"/>
    </location>
</feature>
<feature type="transmembrane region" description="Helical" evidence="1">
    <location>
        <begin position="568"/>
        <end position="588"/>
    </location>
</feature>
<feature type="transmembrane region" description="Helical" evidence="1">
    <location>
        <begin position="604"/>
        <end position="624"/>
    </location>
</feature>
<feature type="transmembrane region" description="Helical" evidence="1">
    <location>
        <begin position="629"/>
        <end position="649"/>
    </location>
</feature>
<feature type="transmembrane region" description="Helical" evidence="1">
    <location>
        <begin position="659"/>
        <end position="679"/>
    </location>
</feature>
<feature type="transmembrane region" description="Helical" evidence="1">
    <location>
        <begin position="681"/>
        <end position="701"/>
    </location>
</feature>
<feature type="transmembrane region" description="Helical" evidence="1">
    <location>
        <begin position="740"/>
        <end position="760"/>
    </location>
</feature>
<feature type="region of interest" description="Disordered" evidence="2">
    <location>
        <begin position="1"/>
        <end position="125"/>
    </location>
</feature>
<feature type="region of interest" description="Disordered" evidence="2">
    <location>
        <begin position="139"/>
        <end position="169"/>
    </location>
</feature>
<feature type="compositionally biased region" description="Polar residues" evidence="2">
    <location>
        <begin position="49"/>
        <end position="63"/>
    </location>
</feature>
<feature type="compositionally biased region" description="Polar residues" evidence="2">
    <location>
        <begin position="78"/>
        <end position="93"/>
    </location>
</feature>
<feature type="compositionally biased region" description="Basic and acidic residues" evidence="2">
    <location>
        <begin position="155"/>
        <end position="169"/>
    </location>
</feature>
<proteinExistence type="inferred from homology"/>
<name>PRM10_YEAS7</name>